<feature type="chain" id="PRO_0000415816" description="E3 ubiquitin-protein ligase RNF26">
    <location>
        <begin position="1"/>
        <end position="424"/>
    </location>
</feature>
<feature type="transmembrane region" description="Helical" evidence="2">
    <location>
        <begin position="24"/>
        <end position="44"/>
    </location>
</feature>
<feature type="transmembrane region" description="Helical" evidence="2">
    <location>
        <begin position="60"/>
        <end position="80"/>
    </location>
</feature>
<feature type="transmembrane region" description="Helical" evidence="2">
    <location>
        <begin position="157"/>
        <end position="177"/>
    </location>
</feature>
<feature type="transmembrane region" description="Helical" evidence="2">
    <location>
        <begin position="183"/>
        <end position="203"/>
    </location>
</feature>
<feature type="transmembrane region" description="Helical" evidence="2">
    <location>
        <begin position="224"/>
        <end position="244"/>
    </location>
</feature>
<feature type="zinc finger region" description="RING-type" evidence="3">
    <location>
        <begin position="371"/>
        <end position="413"/>
    </location>
</feature>
<feature type="splice variant" id="VSP_042390" description="In isoform 2." evidence="4">
    <original>VAYVINSLVNICLISTQNFFSLVLALWDAVTGPLWRMT</original>
    <variation>EPQPTTGQLAKSGRSTRSPPRWPQEGVLSQDPATGHSS</variation>
    <location>
        <begin position="144"/>
        <end position="181"/>
    </location>
</feature>
<feature type="splice variant" id="VSP_042391" description="In isoform 2." evidence="4">
    <location>
        <begin position="182"/>
        <end position="424"/>
    </location>
</feature>
<feature type="sequence conflict" description="In Ref. 3; AAH04739." evidence="5" ref="3">
    <original>L</original>
    <variation>V</variation>
    <location>
        <position position="86"/>
    </location>
</feature>
<feature type="sequence conflict" description="In Ref. 3; AAH04739." evidence="5" ref="3">
    <original>S</original>
    <variation>G</variation>
    <location>
        <position position="158"/>
    </location>
</feature>
<feature type="sequence conflict" description="In Ref. 1; BAC28179." evidence="5" ref="1">
    <original>P</original>
    <variation>H</variation>
    <location>
        <position position="310"/>
    </location>
</feature>
<feature type="sequence conflict" description="In Ref. 3; AAH04739." evidence="5" ref="3">
    <original>T</original>
    <variation>A</variation>
    <location>
        <position position="338"/>
    </location>
</feature>
<keyword id="KW-0025">Alternative splicing</keyword>
<keyword id="KW-0256">Endoplasmic reticulum</keyword>
<keyword id="KW-0472">Membrane</keyword>
<keyword id="KW-0479">Metal-binding</keyword>
<keyword id="KW-1185">Reference proteome</keyword>
<keyword id="KW-0808">Transferase</keyword>
<keyword id="KW-0812">Transmembrane</keyword>
<keyword id="KW-1133">Transmembrane helix</keyword>
<keyword id="KW-0833">Ubl conjugation pathway</keyword>
<keyword id="KW-0862">Zinc</keyword>
<keyword id="KW-0863">Zinc-finger</keyword>
<organism>
    <name type="scientific">Mus musculus</name>
    <name type="common">Mouse</name>
    <dbReference type="NCBI Taxonomy" id="10090"/>
    <lineage>
        <taxon>Eukaryota</taxon>
        <taxon>Metazoa</taxon>
        <taxon>Chordata</taxon>
        <taxon>Craniata</taxon>
        <taxon>Vertebrata</taxon>
        <taxon>Euteleostomi</taxon>
        <taxon>Mammalia</taxon>
        <taxon>Eutheria</taxon>
        <taxon>Euarchontoglires</taxon>
        <taxon>Glires</taxon>
        <taxon>Rodentia</taxon>
        <taxon>Myomorpha</taxon>
        <taxon>Muroidea</taxon>
        <taxon>Muridae</taxon>
        <taxon>Murinae</taxon>
        <taxon>Mus</taxon>
        <taxon>Mus</taxon>
    </lineage>
</organism>
<sequence length="424" mass="46914">MEAVYLVVNGVGLVLDLLTLMLDLNFLLVSSLLATLAWLLAFIYNLPHTVLTSLLHLGRGFLLSLLALVEAVVRFTFGGLQALGTLLYSCYSGLESLKLLGHLASHGALRSREFLNRGILNMVSNGHALLRQACDICAIAMSLVAYVINSLVNICLISTQNFFSLVLALWDAVTGPLWRMTDVVAAFLAHISSSAVAMAILLWTPCQLALELLASAARLLASCVVFHLTGLVLLACVLAVILIVLHPEQTLRLATQALSQLHARPSYHRLWEDIVRLTRLPLGLEAWRRVWSRSLQLASWPNRGGAPGAPQGGPRRVFSARIQPQDTPPEAEEEVIRTAPARGREQLNEDEPAAGQDPWKLLKEQEERKKCVICQDQSKTVLLLPCRHLCLCQACTEILMRHPVYHRNCPLCRRSILQTLNVYL</sequence>
<comment type="function">
    <text evidence="1">E3 ubiquitin-protein ligase that plays a key role in endosome organization by retaining vesicles in the perinuclear cloud. Acts as a platform for perinuclear positioning of the endosomal system by mediating ubiquitination of SQSTM1 through interaction with the ubiquitin conjugating enzyme UBE2J1. Ubiquitinated SQSTM1 attracts specific vesicle-associated adapters, forming a molecular bridge that restrains cognate vesicles in the perinuclear region and organizes the endosomal pathway for efficient cargo transport. Also acts as a regulator of type I interferon production in response to viral infection by mediating the formation of 'Lys-11'-linked polyubiquitin chains on TMEM173/STING, leading to stabilize TMEM173/STING. Also required to limit type I interferon response by promoting autophagic degradation of IRF3.</text>
</comment>
<comment type="catalytic activity">
    <reaction evidence="1">
        <text>S-ubiquitinyl-[E2 ubiquitin-conjugating enzyme]-L-cysteine + [acceptor protein]-L-lysine = [E2 ubiquitin-conjugating enzyme]-L-cysteine + N(6)-ubiquitinyl-[acceptor protein]-L-lysine.</text>
        <dbReference type="EC" id="2.3.2.27"/>
    </reaction>
</comment>
<comment type="pathway">
    <text evidence="1">Protein modification; protein ubiquitination.</text>
</comment>
<comment type="subunit">
    <text evidence="1">Interacts with INCA1. Interacts with TMEM43, ENDOD1, TMEM33 and TMED1 to form a complex capable of modulating innate immune signaling through the cGAS-STING pathway. Interacts with UBE2J1; this interaction is important for SQSTM1 ubiquitination.</text>
</comment>
<comment type="subcellular location">
    <subcellularLocation>
        <location evidence="1">Endoplasmic reticulum membrane</location>
        <topology evidence="2">Multi-pass membrane protein</topology>
    </subcellularLocation>
</comment>
<comment type="alternative products">
    <event type="alternative splicing"/>
    <isoform>
        <id>Q8BUH7-1</id>
        <name>1</name>
        <sequence type="displayed"/>
    </isoform>
    <isoform>
        <id>Q8BUH7-2</id>
        <name>2</name>
        <sequence type="described" ref="VSP_042390 VSP_042391"/>
    </isoform>
</comment>
<dbReference type="EC" id="2.3.2.27" evidence="1"/>
<dbReference type="EMBL" id="AK033164">
    <property type="protein sequence ID" value="BAC28179.1"/>
    <property type="molecule type" value="mRNA"/>
</dbReference>
<dbReference type="EMBL" id="AK085078">
    <property type="protein sequence ID" value="BAC39357.1"/>
    <property type="molecule type" value="mRNA"/>
</dbReference>
<dbReference type="EMBL" id="AK157821">
    <property type="protein sequence ID" value="BAE34211.1"/>
    <property type="molecule type" value="mRNA"/>
</dbReference>
<dbReference type="EMBL" id="AK169538">
    <property type="protein sequence ID" value="BAE41218.1"/>
    <property type="molecule type" value="mRNA"/>
</dbReference>
<dbReference type="EMBL" id="AC148328">
    <property type="status" value="NOT_ANNOTATED_CDS"/>
    <property type="molecule type" value="Genomic_DNA"/>
</dbReference>
<dbReference type="EMBL" id="BC004739">
    <property type="protein sequence ID" value="AAH04739.1"/>
    <property type="molecule type" value="mRNA"/>
</dbReference>
<dbReference type="EMBL" id="BC063251">
    <property type="protein sequence ID" value="AAH63251.1"/>
    <property type="molecule type" value="mRNA"/>
</dbReference>
<dbReference type="EMBL" id="BC086757">
    <property type="protein sequence ID" value="AAH86757.1"/>
    <property type="molecule type" value="mRNA"/>
</dbReference>
<dbReference type="CCDS" id="CCDS23096.1">
    <molecule id="Q8BUH7-1"/>
</dbReference>
<dbReference type="RefSeq" id="NP_717095.2">
    <molecule id="Q8BUH7-1"/>
    <property type="nucleotide sequence ID" value="NM_153762.3"/>
</dbReference>
<dbReference type="SMR" id="Q8BUH7"/>
<dbReference type="FunCoup" id="Q8BUH7">
    <property type="interactions" value="471"/>
</dbReference>
<dbReference type="STRING" id="10090.ENSMUSP00000110478"/>
<dbReference type="iPTMnet" id="Q8BUH7"/>
<dbReference type="PhosphoSitePlus" id="Q8BUH7"/>
<dbReference type="PaxDb" id="10090-ENSMUSP00000110478"/>
<dbReference type="ProteomicsDB" id="301622">
    <molecule id="Q8BUH7-1"/>
</dbReference>
<dbReference type="DNASU" id="213211"/>
<dbReference type="Ensembl" id="ENSMUST00000056328.6">
    <molecule id="Q8BUH7-1"/>
    <property type="protein sequence ID" value="ENSMUSP00000110478.3"/>
    <property type="gene ID" value="ENSMUSG00000053128.16"/>
</dbReference>
<dbReference type="Ensembl" id="ENSMUST00000065379.5">
    <molecule id="Q8BUH7-1"/>
    <property type="protein sequence ID" value="ENSMUSP00000070060.5"/>
    <property type="gene ID" value="ENSMUSG00000053128.16"/>
</dbReference>
<dbReference type="Ensembl" id="ENSMUST00000162126.8">
    <molecule id="Q8BUH7-1"/>
    <property type="protein sequence ID" value="ENSMUSP00000123938.2"/>
    <property type="gene ID" value="ENSMUSG00000111409.2"/>
</dbReference>
<dbReference type="Ensembl" id="ENSMUST00000185479.2">
    <molecule id="Q8BUH7-1"/>
    <property type="protein sequence ID" value="ENSMUSP00000140405.2"/>
    <property type="gene ID" value="ENSMUSG00000111409.2"/>
</dbReference>
<dbReference type="GeneID" id="213211"/>
<dbReference type="KEGG" id="mmu:213211"/>
<dbReference type="UCSC" id="uc009pbu.2">
    <molecule id="Q8BUH7-1"/>
    <property type="organism name" value="mouse"/>
</dbReference>
<dbReference type="AGR" id="MGI:2388131"/>
<dbReference type="CTD" id="79102"/>
<dbReference type="MGI" id="MGI:2388131">
    <property type="gene designation" value="Rnf26"/>
</dbReference>
<dbReference type="VEuPathDB" id="HostDB:ENSMUSG00000053128"/>
<dbReference type="VEuPathDB" id="HostDB:ENSMUSG00000111409"/>
<dbReference type="eggNOG" id="KOG4265">
    <property type="taxonomic scope" value="Eukaryota"/>
</dbReference>
<dbReference type="GeneTree" id="ENSGT00390000016584"/>
<dbReference type="HOGENOM" id="CLU_057705_0_0_1"/>
<dbReference type="InParanoid" id="Q8BUH7"/>
<dbReference type="OMA" id="QIMVPAR"/>
<dbReference type="OrthoDB" id="1711136at2759"/>
<dbReference type="PhylomeDB" id="Q8BUH7"/>
<dbReference type="TreeFam" id="TF331813"/>
<dbReference type="UniPathway" id="UPA00143"/>
<dbReference type="BioGRID-ORCS" id="213211">
    <property type="hits" value="2 hits in 75 CRISPR screens"/>
</dbReference>
<dbReference type="ChiTaRS" id="Rnf26">
    <property type="organism name" value="mouse"/>
</dbReference>
<dbReference type="PRO" id="PR:Q8BUH7"/>
<dbReference type="Proteomes" id="UP000000589">
    <property type="component" value="Chromosome 9"/>
</dbReference>
<dbReference type="RNAct" id="Q8BUH7">
    <property type="molecule type" value="protein"/>
</dbReference>
<dbReference type="Bgee" id="ENSMUSG00000053128">
    <property type="expression patterns" value="Expressed in tracheobronchial tree and 114 other cell types or tissues"/>
</dbReference>
<dbReference type="ExpressionAtlas" id="Q8BUH7">
    <property type="expression patterns" value="baseline and differential"/>
</dbReference>
<dbReference type="GO" id="GO:0005789">
    <property type="term" value="C:endoplasmic reticulum membrane"/>
    <property type="evidence" value="ECO:0000250"/>
    <property type="project" value="UniProtKB"/>
</dbReference>
<dbReference type="GO" id="GO:0061630">
    <property type="term" value="F:ubiquitin protein ligase activity"/>
    <property type="evidence" value="ECO:0000250"/>
    <property type="project" value="UniProtKB"/>
</dbReference>
<dbReference type="GO" id="GO:0008270">
    <property type="term" value="F:zinc ion binding"/>
    <property type="evidence" value="ECO:0007669"/>
    <property type="project" value="UniProtKB-KW"/>
</dbReference>
<dbReference type="GO" id="GO:0007032">
    <property type="term" value="P:endosome organization"/>
    <property type="evidence" value="ECO:0000250"/>
    <property type="project" value="UniProtKB"/>
</dbReference>
<dbReference type="GO" id="GO:0050687">
    <property type="term" value="P:negative regulation of defense response to virus"/>
    <property type="evidence" value="ECO:0000250"/>
    <property type="project" value="UniProtKB"/>
</dbReference>
<dbReference type="GO" id="GO:0070979">
    <property type="term" value="P:protein K11-linked ubiquitination"/>
    <property type="evidence" value="ECO:0000250"/>
    <property type="project" value="UniProtKB"/>
</dbReference>
<dbReference type="GO" id="GO:1905719">
    <property type="term" value="P:protein localization to perinuclear region of cytoplasm"/>
    <property type="evidence" value="ECO:0000250"/>
    <property type="project" value="UniProtKB"/>
</dbReference>
<dbReference type="GO" id="GO:0016567">
    <property type="term" value="P:protein ubiquitination"/>
    <property type="evidence" value="ECO:0000250"/>
    <property type="project" value="UniProtKB"/>
</dbReference>
<dbReference type="GO" id="GO:0032479">
    <property type="term" value="P:regulation of type I interferon production"/>
    <property type="evidence" value="ECO:0000250"/>
    <property type="project" value="UniProtKB"/>
</dbReference>
<dbReference type="CDD" id="cd16788">
    <property type="entry name" value="mRING-HC-C3HC5_RNF26"/>
    <property type="match status" value="1"/>
</dbReference>
<dbReference type="FunFam" id="3.30.40.10:FF:000387">
    <property type="entry name" value="RING finger protein 26"/>
    <property type="match status" value="1"/>
</dbReference>
<dbReference type="Gene3D" id="3.30.40.10">
    <property type="entry name" value="Zinc/RING finger domain, C3HC4 (zinc finger)"/>
    <property type="match status" value="1"/>
</dbReference>
<dbReference type="InterPro" id="IPR040089">
    <property type="entry name" value="RNF26_mRING-HC-C3HC5"/>
</dbReference>
<dbReference type="InterPro" id="IPR001841">
    <property type="entry name" value="Znf_RING"/>
</dbReference>
<dbReference type="InterPro" id="IPR013083">
    <property type="entry name" value="Znf_RING/FYVE/PHD"/>
</dbReference>
<dbReference type="PANTHER" id="PTHR22696">
    <property type="entry name" value="E3 UBIQUITIN-PROTEIN LIGASE RNF26"/>
    <property type="match status" value="1"/>
</dbReference>
<dbReference type="PANTHER" id="PTHR22696:SF1">
    <property type="entry name" value="E3 UBIQUITIN-PROTEIN LIGASE RNF26"/>
    <property type="match status" value="1"/>
</dbReference>
<dbReference type="Pfam" id="PF13920">
    <property type="entry name" value="zf-C3HC4_3"/>
    <property type="match status" value="1"/>
</dbReference>
<dbReference type="SUPFAM" id="SSF57850">
    <property type="entry name" value="RING/U-box"/>
    <property type="match status" value="1"/>
</dbReference>
<dbReference type="PROSITE" id="PS50089">
    <property type="entry name" value="ZF_RING_2"/>
    <property type="match status" value="1"/>
</dbReference>
<name>RNF26_MOUSE</name>
<proteinExistence type="evidence at transcript level"/>
<reference key="1">
    <citation type="journal article" date="2005" name="Science">
        <title>The transcriptional landscape of the mammalian genome.</title>
        <authorList>
            <person name="Carninci P."/>
            <person name="Kasukawa T."/>
            <person name="Katayama S."/>
            <person name="Gough J."/>
            <person name="Frith M.C."/>
            <person name="Maeda N."/>
            <person name="Oyama R."/>
            <person name="Ravasi T."/>
            <person name="Lenhard B."/>
            <person name="Wells C."/>
            <person name="Kodzius R."/>
            <person name="Shimokawa K."/>
            <person name="Bajic V.B."/>
            <person name="Brenner S.E."/>
            <person name="Batalov S."/>
            <person name="Forrest A.R."/>
            <person name="Zavolan M."/>
            <person name="Davis M.J."/>
            <person name="Wilming L.G."/>
            <person name="Aidinis V."/>
            <person name="Allen J.E."/>
            <person name="Ambesi-Impiombato A."/>
            <person name="Apweiler R."/>
            <person name="Aturaliya R.N."/>
            <person name="Bailey T.L."/>
            <person name="Bansal M."/>
            <person name="Baxter L."/>
            <person name="Beisel K.W."/>
            <person name="Bersano T."/>
            <person name="Bono H."/>
            <person name="Chalk A.M."/>
            <person name="Chiu K.P."/>
            <person name="Choudhary V."/>
            <person name="Christoffels A."/>
            <person name="Clutterbuck D.R."/>
            <person name="Crowe M.L."/>
            <person name="Dalla E."/>
            <person name="Dalrymple B.P."/>
            <person name="de Bono B."/>
            <person name="Della Gatta G."/>
            <person name="di Bernardo D."/>
            <person name="Down T."/>
            <person name="Engstrom P."/>
            <person name="Fagiolini M."/>
            <person name="Faulkner G."/>
            <person name="Fletcher C.F."/>
            <person name="Fukushima T."/>
            <person name="Furuno M."/>
            <person name="Futaki S."/>
            <person name="Gariboldi M."/>
            <person name="Georgii-Hemming P."/>
            <person name="Gingeras T.R."/>
            <person name="Gojobori T."/>
            <person name="Green R.E."/>
            <person name="Gustincich S."/>
            <person name="Harbers M."/>
            <person name="Hayashi Y."/>
            <person name="Hensch T.K."/>
            <person name="Hirokawa N."/>
            <person name="Hill D."/>
            <person name="Huminiecki L."/>
            <person name="Iacono M."/>
            <person name="Ikeo K."/>
            <person name="Iwama A."/>
            <person name="Ishikawa T."/>
            <person name="Jakt M."/>
            <person name="Kanapin A."/>
            <person name="Katoh M."/>
            <person name="Kawasawa Y."/>
            <person name="Kelso J."/>
            <person name="Kitamura H."/>
            <person name="Kitano H."/>
            <person name="Kollias G."/>
            <person name="Krishnan S.P."/>
            <person name="Kruger A."/>
            <person name="Kummerfeld S.K."/>
            <person name="Kurochkin I.V."/>
            <person name="Lareau L.F."/>
            <person name="Lazarevic D."/>
            <person name="Lipovich L."/>
            <person name="Liu J."/>
            <person name="Liuni S."/>
            <person name="McWilliam S."/>
            <person name="Madan Babu M."/>
            <person name="Madera M."/>
            <person name="Marchionni L."/>
            <person name="Matsuda H."/>
            <person name="Matsuzawa S."/>
            <person name="Miki H."/>
            <person name="Mignone F."/>
            <person name="Miyake S."/>
            <person name="Morris K."/>
            <person name="Mottagui-Tabar S."/>
            <person name="Mulder N."/>
            <person name="Nakano N."/>
            <person name="Nakauchi H."/>
            <person name="Ng P."/>
            <person name="Nilsson R."/>
            <person name="Nishiguchi S."/>
            <person name="Nishikawa S."/>
            <person name="Nori F."/>
            <person name="Ohara O."/>
            <person name="Okazaki Y."/>
            <person name="Orlando V."/>
            <person name="Pang K.C."/>
            <person name="Pavan W.J."/>
            <person name="Pavesi G."/>
            <person name="Pesole G."/>
            <person name="Petrovsky N."/>
            <person name="Piazza S."/>
            <person name="Reed J."/>
            <person name="Reid J.F."/>
            <person name="Ring B.Z."/>
            <person name="Ringwald M."/>
            <person name="Rost B."/>
            <person name="Ruan Y."/>
            <person name="Salzberg S.L."/>
            <person name="Sandelin A."/>
            <person name="Schneider C."/>
            <person name="Schoenbach C."/>
            <person name="Sekiguchi K."/>
            <person name="Semple C.A."/>
            <person name="Seno S."/>
            <person name="Sessa L."/>
            <person name="Sheng Y."/>
            <person name="Shibata Y."/>
            <person name="Shimada H."/>
            <person name="Shimada K."/>
            <person name="Silva D."/>
            <person name="Sinclair B."/>
            <person name="Sperling S."/>
            <person name="Stupka E."/>
            <person name="Sugiura K."/>
            <person name="Sultana R."/>
            <person name="Takenaka Y."/>
            <person name="Taki K."/>
            <person name="Tammoja K."/>
            <person name="Tan S.L."/>
            <person name="Tang S."/>
            <person name="Taylor M.S."/>
            <person name="Tegner J."/>
            <person name="Teichmann S.A."/>
            <person name="Ueda H.R."/>
            <person name="van Nimwegen E."/>
            <person name="Verardo R."/>
            <person name="Wei C.L."/>
            <person name="Yagi K."/>
            <person name="Yamanishi H."/>
            <person name="Zabarovsky E."/>
            <person name="Zhu S."/>
            <person name="Zimmer A."/>
            <person name="Hide W."/>
            <person name="Bult C."/>
            <person name="Grimmond S.M."/>
            <person name="Teasdale R.D."/>
            <person name="Liu E.T."/>
            <person name="Brusic V."/>
            <person name="Quackenbush J."/>
            <person name="Wahlestedt C."/>
            <person name="Mattick J.S."/>
            <person name="Hume D.A."/>
            <person name="Kai C."/>
            <person name="Sasaki D."/>
            <person name="Tomaru Y."/>
            <person name="Fukuda S."/>
            <person name="Kanamori-Katayama M."/>
            <person name="Suzuki M."/>
            <person name="Aoki J."/>
            <person name="Arakawa T."/>
            <person name="Iida J."/>
            <person name="Imamura K."/>
            <person name="Itoh M."/>
            <person name="Kato T."/>
            <person name="Kawaji H."/>
            <person name="Kawagashira N."/>
            <person name="Kawashima T."/>
            <person name="Kojima M."/>
            <person name="Kondo S."/>
            <person name="Konno H."/>
            <person name="Nakano K."/>
            <person name="Ninomiya N."/>
            <person name="Nishio T."/>
            <person name="Okada M."/>
            <person name="Plessy C."/>
            <person name="Shibata K."/>
            <person name="Shiraki T."/>
            <person name="Suzuki S."/>
            <person name="Tagami M."/>
            <person name="Waki K."/>
            <person name="Watahiki A."/>
            <person name="Okamura-Oho Y."/>
            <person name="Suzuki H."/>
            <person name="Kawai J."/>
            <person name="Hayashizaki Y."/>
        </authorList>
    </citation>
    <scope>NUCLEOTIDE SEQUENCE [LARGE SCALE MRNA] (ISOFORM 1)</scope>
    <source>
        <strain>C57BL/6J</strain>
        <tissue>Embryo</tissue>
        <tissue>Lung</tissue>
        <tissue>Testis</tissue>
        <tissue>Thymus</tissue>
    </source>
</reference>
<reference key="2">
    <citation type="journal article" date="2009" name="PLoS Biol.">
        <title>Lineage-specific biology revealed by a finished genome assembly of the mouse.</title>
        <authorList>
            <person name="Church D.M."/>
            <person name="Goodstadt L."/>
            <person name="Hillier L.W."/>
            <person name="Zody M.C."/>
            <person name="Goldstein S."/>
            <person name="She X."/>
            <person name="Bult C.J."/>
            <person name="Agarwala R."/>
            <person name="Cherry J.L."/>
            <person name="DiCuccio M."/>
            <person name="Hlavina W."/>
            <person name="Kapustin Y."/>
            <person name="Meric P."/>
            <person name="Maglott D."/>
            <person name="Birtle Z."/>
            <person name="Marques A.C."/>
            <person name="Graves T."/>
            <person name="Zhou S."/>
            <person name="Teague B."/>
            <person name="Potamousis K."/>
            <person name="Churas C."/>
            <person name="Place M."/>
            <person name="Herschleb J."/>
            <person name="Runnheim R."/>
            <person name="Forrest D."/>
            <person name="Amos-Landgraf J."/>
            <person name="Schwartz D.C."/>
            <person name="Cheng Z."/>
            <person name="Lindblad-Toh K."/>
            <person name="Eichler E.E."/>
            <person name="Ponting C.P."/>
        </authorList>
    </citation>
    <scope>NUCLEOTIDE SEQUENCE [LARGE SCALE GENOMIC DNA]</scope>
    <source>
        <strain>C57BL/6J</strain>
    </source>
</reference>
<reference key="3">
    <citation type="journal article" date="2004" name="Genome Res.">
        <title>The status, quality, and expansion of the NIH full-length cDNA project: the Mammalian Gene Collection (MGC).</title>
        <authorList>
            <consortium name="The MGC Project Team"/>
        </authorList>
    </citation>
    <scope>NUCLEOTIDE SEQUENCE [LARGE SCALE MRNA] (ISOFORMS 1 AND 2)</scope>
    <source>
        <strain>C57BL/6J</strain>
        <strain>Czech II</strain>
        <tissue>Brain</tissue>
        <tissue>Eye</tissue>
        <tissue>Mammary tumor</tissue>
    </source>
</reference>
<protein>
    <recommendedName>
        <fullName evidence="5">E3 ubiquitin-protein ligase RNF26</fullName>
        <ecNumber evidence="1">2.3.2.27</ecNumber>
    </recommendedName>
    <alternativeName>
        <fullName evidence="5">RING finger protein 26</fullName>
    </alternativeName>
</protein>
<accession>Q8BUH7</accession>
<accession>F6SS41</accession>
<accession>Q5PR90</accession>
<accession>Q8BZY8</accession>
<accession>Q99KC1</accession>
<evidence type="ECO:0000250" key="1">
    <source>
        <dbReference type="UniProtKB" id="Q9BY78"/>
    </source>
</evidence>
<evidence type="ECO:0000255" key="2"/>
<evidence type="ECO:0000255" key="3">
    <source>
        <dbReference type="PROSITE-ProRule" id="PRU00175"/>
    </source>
</evidence>
<evidence type="ECO:0000303" key="4">
    <source>
    </source>
</evidence>
<evidence type="ECO:0000305" key="5"/>
<evidence type="ECO:0000312" key="6">
    <source>
        <dbReference type="MGI" id="MGI:2388131"/>
    </source>
</evidence>
<gene>
    <name evidence="6" type="primary">Rnf26</name>
</gene>